<reference key="1">
    <citation type="journal article" date="2008" name="Genome Res.">
        <title>Comparative genome analysis of Salmonella enteritidis PT4 and Salmonella gallinarum 287/91 provides insights into evolutionary and host adaptation pathways.</title>
        <authorList>
            <person name="Thomson N.R."/>
            <person name="Clayton D.J."/>
            <person name="Windhorst D."/>
            <person name="Vernikos G."/>
            <person name="Davidson S."/>
            <person name="Churcher C."/>
            <person name="Quail M.A."/>
            <person name="Stevens M."/>
            <person name="Jones M.A."/>
            <person name="Watson M."/>
            <person name="Barron A."/>
            <person name="Layton A."/>
            <person name="Pickard D."/>
            <person name="Kingsley R.A."/>
            <person name="Bignell A."/>
            <person name="Clark L."/>
            <person name="Harris B."/>
            <person name="Ormond D."/>
            <person name="Abdellah Z."/>
            <person name="Brooks K."/>
            <person name="Cherevach I."/>
            <person name="Chillingworth T."/>
            <person name="Woodward J."/>
            <person name="Norberczak H."/>
            <person name="Lord A."/>
            <person name="Arrowsmith C."/>
            <person name="Jagels K."/>
            <person name="Moule S."/>
            <person name="Mungall K."/>
            <person name="Saunders M."/>
            <person name="Whitehead S."/>
            <person name="Chabalgoity J.A."/>
            <person name="Maskell D."/>
            <person name="Humphreys T."/>
            <person name="Roberts M."/>
            <person name="Barrow P.A."/>
            <person name="Dougan G."/>
            <person name="Parkhill J."/>
        </authorList>
    </citation>
    <scope>NUCLEOTIDE SEQUENCE [LARGE SCALE GENOMIC DNA]</scope>
    <source>
        <strain>P125109</strain>
    </source>
</reference>
<dbReference type="EMBL" id="AM933172">
    <property type="protein sequence ID" value="CAR35424.1"/>
    <property type="molecule type" value="Genomic_DNA"/>
</dbReference>
<dbReference type="RefSeq" id="WP_001077320.1">
    <property type="nucleotide sequence ID" value="NC_011294.1"/>
</dbReference>
<dbReference type="SMR" id="B5QWZ4"/>
<dbReference type="KEGG" id="set:SEN3851"/>
<dbReference type="HOGENOM" id="CLU_013430_3_0_6"/>
<dbReference type="Proteomes" id="UP000000613">
    <property type="component" value="Chromosome"/>
</dbReference>
<dbReference type="GO" id="GO:0005886">
    <property type="term" value="C:plasma membrane"/>
    <property type="evidence" value="ECO:0007669"/>
    <property type="project" value="UniProtKB-SubCell"/>
</dbReference>
<dbReference type="GO" id="GO:0015086">
    <property type="term" value="F:cadmium ion transmembrane transporter activity"/>
    <property type="evidence" value="ECO:0007669"/>
    <property type="project" value="UniProtKB-UniRule"/>
</dbReference>
<dbReference type="GO" id="GO:0015093">
    <property type="term" value="F:ferrous iron transmembrane transporter activity"/>
    <property type="evidence" value="ECO:0007669"/>
    <property type="project" value="TreeGrafter"/>
</dbReference>
<dbReference type="GO" id="GO:0046872">
    <property type="term" value="F:metal ion binding"/>
    <property type="evidence" value="ECO:0007669"/>
    <property type="project" value="UniProtKB-KW"/>
</dbReference>
<dbReference type="GO" id="GO:0015341">
    <property type="term" value="F:zinc efflux antiporter activity"/>
    <property type="evidence" value="ECO:0007669"/>
    <property type="project" value="TreeGrafter"/>
</dbReference>
<dbReference type="GO" id="GO:0006882">
    <property type="term" value="P:intracellular zinc ion homeostasis"/>
    <property type="evidence" value="ECO:0007669"/>
    <property type="project" value="TreeGrafter"/>
</dbReference>
<dbReference type="FunFam" id="1.20.1510.10:FF:000001">
    <property type="entry name" value="Ferrous-iron efflux pump FieF"/>
    <property type="match status" value="1"/>
</dbReference>
<dbReference type="FunFam" id="3.30.70.1350:FF:000002">
    <property type="entry name" value="Ferrous-iron efflux pump FieF"/>
    <property type="match status" value="1"/>
</dbReference>
<dbReference type="Gene3D" id="1.20.1510.10">
    <property type="entry name" value="Cation efflux protein transmembrane domain"/>
    <property type="match status" value="1"/>
</dbReference>
<dbReference type="Gene3D" id="3.30.70.1350">
    <property type="entry name" value="Cation efflux protein, cytoplasmic domain"/>
    <property type="match status" value="1"/>
</dbReference>
<dbReference type="HAMAP" id="MF_01425">
    <property type="entry name" value="Cation_efflux_FieF"/>
    <property type="match status" value="1"/>
</dbReference>
<dbReference type="InterPro" id="IPR002524">
    <property type="entry name" value="Cation_efflux"/>
</dbReference>
<dbReference type="InterPro" id="IPR027470">
    <property type="entry name" value="Cation_efflux_CTD"/>
</dbReference>
<dbReference type="InterPro" id="IPR036837">
    <property type="entry name" value="Cation_efflux_CTD_sf"/>
</dbReference>
<dbReference type="InterPro" id="IPR023783">
    <property type="entry name" value="Cation_efflux_FieF"/>
</dbReference>
<dbReference type="InterPro" id="IPR027469">
    <property type="entry name" value="Cation_efflux_TMD_sf"/>
</dbReference>
<dbReference type="InterPro" id="IPR050291">
    <property type="entry name" value="CDF_Transporter"/>
</dbReference>
<dbReference type="NCBIfam" id="TIGR01297">
    <property type="entry name" value="CDF"/>
    <property type="match status" value="1"/>
</dbReference>
<dbReference type="NCBIfam" id="NF007064">
    <property type="entry name" value="PRK09509.1"/>
    <property type="match status" value="1"/>
</dbReference>
<dbReference type="PANTHER" id="PTHR43840:SF41">
    <property type="entry name" value="CATION-EFFLUX PUMP FIEF"/>
    <property type="match status" value="1"/>
</dbReference>
<dbReference type="PANTHER" id="PTHR43840">
    <property type="entry name" value="MITOCHONDRIAL METAL TRANSPORTER 1-RELATED"/>
    <property type="match status" value="1"/>
</dbReference>
<dbReference type="Pfam" id="PF01545">
    <property type="entry name" value="Cation_efflux"/>
    <property type="match status" value="1"/>
</dbReference>
<dbReference type="Pfam" id="PF16916">
    <property type="entry name" value="ZT_dimer"/>
    <property type="match status" value="1"/>
</dbReference>
<dbReference type="SUPFAM" id="SSF160240">
    <property type="entry name" value="Cation efflux protein cytoplasmic domain-like"/>
    <property type="match status" value="1"/>
</dbReference>
<dbReference type="SUPFAM" id="SSF161111">
    <property type="entry name" value="Cation efflux protein transmembrane domain-like"/>
    <property type="match status" value="1"/>
</dbReference>
<accession>B5QWZ4</accession>
<organism>
    <name type="scientific">Salmonella enteritidis PT4 (strain P125109)</name>
    <dbReference type="NCBI Taxonomy" id="550537"/>
    <lineage>
        <taxon>Bacteria</taxon>
        <taxon>Pseudomonadati</taxon>
        <taxon>Pseudomonadota</taxon>
        <taxon>Gammaproteobacteria</taxon>
        <taxon>Enterobacterales</taxon>
        <taxon>Enterobacteriaceae</taxon>
        <taxon>Salmonella</taxon>
    </lineage>
</organism>
<sequence length="300" mass="32974">MNQTYGRLVSRAAIAATAMASALLLIKIFAWWYTGSVSILAALVDSLVDIAASLTNLLVVRYSLQPADDEHTFGHGKAESLAALAQSMFISGSALFLFLTSIQNLIKPTPMNDPGVGIGVTVIALICTIILVTFQRWVVRKTQSQAVRADMLHYQSDVMMNGAILIALGLSWYGWHRADALFALGIGIYILYSALRMGYEAVQSLLDRALPDAERQEIIDIVTSWPGVSGAHDLRTRQSGPTRFIQIHLEMEDNLPLVQAHFVADQVEQAILQRFPGSDVIIHQDPCSVVPREGRKFELV</sequence>
<comment type="function">
    <text evidence="1">Divalent metal cation transporter which exports Zn(2+), Cd(2+) and possibly Fe(2+). May be involved in zinc and iron detoxification by efflux.</text>
</comment>
<comment type="catalytic activity">
    <reaction evidence="1">
        <text>Zn(2+)(in) + H(+)(out) = Zn(2+)(out) + H(+)(in)</text>
        <dbReference type="Rhea" id="RHEA:28839"/>
        <dbReference type="ChEBI" id="CHEBI:15378"/>
        <dbReference type="ChEBI" id="CHEBI:29105"/>
    </reaction>
</comment>
<comment type="catalytic activity">
    <reaction evidence="1">
        <text>Cd(2+)(in) + H(+)(out) = Cd(2+)(out) + H(+)(in)</text>
        <dbReference type="Rhea" id="RHEA:28739"/>
        <dbReference type="ChEBI" id="CHEBI:15378"/>
        <dbReference type="ChEBI" id="CHEBI:48775"/>
    </reaction>
</comment>
<comment type="catalytic activity">
    <reaction evidence="1">
        <text>Fe(2+)(in) + H(+)(out) = Fe(2+)(out) + H(+)(in)</text>
        <dbReference type="Rhea" id="RHEA:29439"/>
        <dbReference type="ChEBI" id="CHEBI:15378"/>
        <dbReference type="ChEBI" id="CHEBI:29033"/>
    </reaction>
</comment>
<comment type="subunit">
    <text evidence="1">Homodimer.</text>
</comment>
<comment type="subcellular location">
    <subcellularLocation>
        <location evidence="1">Cell inner membrane</location>
        <topology evidence="1">Multi-pass membrane protein</topology>
    </subcellularLocation>
</comment>
<comment type="similarity">
    <text evidence="1">Belongs to the cation diffusion facilitator (CDF) transporter (TC 2.A.4) family. FieF subfamily.</text>
</comment>
<protein>
    <recommendedName>
        <fullName evidence="1">Cation-efflux pump FieF</fullName>
    </recommendedName>
</protein>
<keyword id="KW-0997">Cell inner membrane</keyword>
<keyword id="KW-1003">Cell membrane</keyword>
<keyword id="KW-0406">Ion transport</keyword>
<keyword id="KW-0408">Iron</keyword>
<keyword id="KW-0410">Iron transport</keyword>
<keyword id="KW-0472">Membrane</keyword>
<keyword id="KW-0479">Metal-binding</keyword>
<keyword id="KW-0812">Transmembrane</keyword>
<keyword id="KW-1133">Transmembrane helix</keyword>
<keyword id="KW-0813">Transport</keyword>
<keyword id="KW-0862">Zinc</keyword>
<keyword id="KW-0864">Zinc transport</keyword>
<evidence type="ECO:0000255" key="1">
    <source>
        <dbReference type="HAMAP-Rule" id="MF_01425"/>
    </source>
</evidence>
<name>FIEF_SALEP</name>
<gene>
    <name evidence="1" type="primary">fieF</name>
    <name type="ordered locus">SEN3851</name>
</gene>
<feature type="chain" id="PRO_1000145701" description="Cation-efflux pump FieF">
    <location>
        <begin position="1"/>
        <end position="300"/>
    </location>
</feature>
<feature type="transmembrane region" description="Helical" evidence="1">
    <location>
        <begin position="24"/>
        <end position="44"/>
    </location>
</feature>
<feature type="transmembrane region" description="Helical" evidence="1">
    <location>
        <begin position="82"/>
        <end position="102"/>
    </location>
</feature>
<feature type="transmembrane region" description="Helical" evidence="1">
    <location>
        <begin position="114"/>
        <end position="134"/>
    </location>
</feature>
<feature type="transmembrane region" description="Helical" evidence="1">
    <location>
        <begin position="156"/>
        <end position="176"/>
    </location>
</feature>
<feature type="transmembrane region" description="Helical" evidence="1">
    <location>
        <begin position="178"/>
        <end position="198"/>
    </location>
</feature>
<feature type="binding site" evidence="1">
    <location>
        <position position="45"/>
    </location>
    <ligand>
        <name>Zn(2+)</name>
        <dbReference type="ChEBI" id="CHEBI:29105"/>
    </ligand>
</feature>
<feature type="binding site" evidence="1">
    <location>
        <position position="49"/>
    </location>
    <ligand>
        <name>Zn(2+)</name>
        <dbReference type="ChEBI" id="CHEBI:29105"/>
    </ligand>
</feature>
<feature type="binding site" evidence="1">
    <location>
        <position position="153"/>
    </location>
    <ligand>
        <name>Zn(2+)</name>
        <dbReference type="ChEBI" id="CHEBI:29105"/>
    </ligand>
</feature>
<feature type="binding site" evidence="1">
    <location>
        <position position="157"/>
    </location>
    <ligand>
        <name>Zn(2+)</name>
        <dbReference type="ChEBI" id="CHEBI:29105"/>
    </ligand>
</feature>
<proteinExistence type="inferred from homology"/>